<organism>
    <name type="scientific">Escherichia phage lambda</name>
    <name type="common">Bacteriophage lambda</name>
    <dbReference type="NCBI Taxonomy" id="2681611"/>
    <lineage>
        <taxon>Viruses</taxon>
        <taxon>Duplodnaviria</taxon>
        <taxon>Heunggongvirae</taxon>
        <taxon>Uroviricota</taxon>
        <taxon>Caudoviricetes</taxon>
        <taxon>Lambdavirus</taxon>
        <taxon>Lambdavirus lambda</taxon>
    </lineage>
</organism>
<name>SCAF_LAMBD</name>
<dbReference type="EC" id="3.4.21.-"/>
<dbReference type="EMBL" id="J02459">
    <property type="protein sequence ID" value="AAA96537.1"/>
    <property type="molecule type" value="Genomic_DNA"/>
</dbReference>
<dbReference type="EMBL" id="J02459">
    <property type="protein sequence ID" value="AAA96538.1"/>
    <property type="status" value="ALT_INIT"/>
    <property type="molecule type" value="Genomic_DNA"/>
</dbReference>
<dbReference type="PIR" id="A04333">
    <property type="entry name" value="VHBPCL"/>
</dbReference>
<dbReference type="RefSeq" id="NP_040584.1">
    <molecule id="P03711-1"/>
    <property type="nucleotide sequence ID" value="NC_001416.1"/>
</dbReference>
<dbReference type="RefSeq" id="NP_040585.1">
    <property type="nucleotide sequence ID" value="NC_001416.1"/>
</dbReference>
<dbReference type="SMR" id="P03711"/>
<dbReference type="IntAct" id="P03711">
    <property type="interactions" value="4"/>
</dbReference>
<dbReference type="MEROPS" id="S49.003"/>
<dbReference type="GeneID" id="2703527"/>
<dbReference type="GeneID" id="2703528"/>
<dbReference type="KEGG" id="vg:2703527"/>
<dbReference type="KEGG" id="vg:2703528"/>
<dbReference type="Proteomes" id="UP000001711">
    <property type="component" value="Genome"/>
</dbReference>
<dbReference type="GO" id="GO:0030430">
    <property type="term" value="C:host cell cytoplasm"/>
    <property type="evidence" value="ECO:0007669"/>
    <property type="project" value="UniProtKB-SubCell"/>
</dbReference>
<dbReference type="GO" id="GO:0019028">
    <property type="term" value="C:viral capsid"/>
    <property type="evidence" value="ECO:0007669"/>
    <property type="project" value="UniProtKB-KW"/>
</dbReference>
<dbReference type="GO" id="GO:0042802">
    <property type="term" value="F:identical protein binding"/>
    <property type="evidence" value="ECO:0000353"/>
    <property type="project" value="IntAct"/>
</dbReference>
<dbReference type="GO" id="GO:0008236">
    <property type="term" value="F:serine-type peptidase activity"/>
    <property type="evidence" value="ECO:0007669"/>
    <property type="project" value="UniProtKB-KW"/>
</dbReference>
<dbReference type="GO" id="GO:0006508">
    <property type="term" value="P:proteolysis"/>
    <property type="evidence" value="ECO:0007669"/>
    <property type="project" value="UniProtKB-KW"/>
</dbReference>
<dbReference type="GO" id="GO:0046797">
    <property type="term" value="P:viral procapsid maturation"/>
    <property type="evidence" value="ECO:0007669"/>
    <property type="project" value="UniProtKB-KW"/>
</dbReference>
<dbReference type="CDD" id="cd07022">
    <property type="entry name" value="S49_Sppa_36K_type"/>
    <property type="match status" value="1"/>
</dbReference>
<dbReference type="Gene3D" id="6.20.330.10">
    <property type="match status" value="1"/>
</dbReference>
<dbReference type="Gene3D" id="3.90.226.10">
    <property type="entry name" value="2-enoyl-CoA Hydratase, Chain A, domain 1"/>
    <property type="match status" value="1"/>
</dbReference>
<dbReference type="InterPro" id="IPR029045">
    <property type="entry name" value="ClpP/crotonase-like_dom_sf"/>
</dbReference>
<dbReference type="InterPro" id="IPR002142">
    <property type="entry name" value="Peptidase_S49"/>
</dbReference>
<dbReference type="InterPro" id="IPR033855">
    <property type="entry name" value="Protein_C"/>
</dbReference>
<dbReference type="PANTHER" id="PTHR33209:SF1">
    <property type="entry name" value="PEPTIDASE S49 DOMAIN-CONTAINING PROTEIN"/>
    <property type="match status" value="1"/>
</dbReference>
<dbReference type="PANTHER" id="PTHR33209">
    <property type="entry name" value="PROTEASE 4"/>
    <property type="match status" value="1"/>
</dbReference>
<dbReference type="Pfam" id="PF01343">
    <property type="entry name" value="Peptidase_S49"/>
    <property type="match status" value="1"/>
</dbReference>
<dbReference type="SUPFAM" id="SSF52096">
    <property type="entry name" value="ClpP/crotonase"/>
    <property type="match status" value="1"/>
</dbReference>
<proteinExistence type="evidence at protein level"/>
<feature type="chain" id="PRO_0000027358" description="Capsid assembly protease C">
    <location>
        <begin position="1"/>
        <end position="439"/>
    </location>
</feature>
<feature type="region of interest" description="Disordered" evidence="2">
    <location>
        <begin position="303"/>
        <end position="327"/>
    </location>
</feature>
<feature type="compositionally biased region" description="Low complexity" evidence="2">
    <location>
        <begin position="313"/>
        <end position="327"/>
    </location>
</feature>
<feature type="active site" description="Nucleophile" evidence="1">
    <location>
        <position position="166"/>
    </location>
</feature>
<feature type="splice variant" id="VSP_054968" description="In isoform Capsid scaffolding protein Nu3." evidence="4">
    <location>
        <begin position="1"/>
        <end position="308"/>
    </location>
</feature>
<feature type="mutagenesis site" description="Complete loss of protease activity." evidence="3">
    <original>S</original>
    <variation>A</variation>
    <location>
        <position position="166"/>
    </location>
</feature>
<sequence length="439" mass="45940">MTAELRNLPHIASMAFNEPLMLEPAYARVFFCALAGQLGISSLTDAVSGDSLTAQEALATLALSGDDDGPRQARSYQVMNGIAVLPVSGTLVSRTRALQPYSGMTGYNGIIARLQQAASDPMVDGILLDMDTPGGMVAGAFDCADIIARVRDIKPVWALANDMNCSAGQLLASAASRRLVTQTARTGSIGVMMAHSNYGAALEKQGVEITLIYSGSHKVDGNPYSHLPDDVRETLQSRMDATRQMFAQKVSAYTGLSVQVVLDTEAAVYSGQEAIDAGLADELVNSTDAITVMRDALDARKSRLSGGRMTKETQSTTVSATASQADVTDVVPATEGENASAAQPDVNAQITAAVAAENSRIMGILNCEEAHGREEQARVLAETPGMTVKTARRILAAAPQSAQARSDTALDRLMQGAPAPLAAGNPASDAVNDLLNTPV</sequence>
<accession>P03711</accession>
<evidence type="ECO:0000250" key="1"/>
<evidence type="ECO:0000256" key="2">
    <source>
        <dbReference type="SAM" id="MobiDB-lite"/>
    </source>
</evidence>
<evidence type="ECO:0000269" key="3">
    <source>
    </source>
</evidence>
<evidence type="ECO:0000305" key="4"/>
<gene>
    <name type="primary">C</name>
</gene>
<gene>
    <name type="primary">NU3</name>
    <name type="ordered locus">lambdap05</name>
</gene>
<comment type="function">
    <text>Assembly protease promotes icosahedral procapsid assembly. Autocatalytic cleavage may release the capsid scaffolding protein. The protease domain catalyzes the cleavage of the capsid scaffolding protein after complete procapsid formation. Assembly protease and cleavages products are evicted from the capsid before or during DNA packaging.</text>
</comment>
<comment type="function">
    <text>Scaffolding protein Nu3 promotes icosahedral procapsid assembly. Acts by binding the major capsid protein gpE and multimerizing in interaction with portal dodecamer, thereby placing gpE in a context facilitating icosahedral procapsid formation. Cleaved by capsid assembly protease C after capsid completion. The cleavages products are evicted from the capsid before or during DNA packaging.</text>
</comment>
<comment type="subunit">
    <text>Capsid assembly protease interacts with capsid scaffolding protein Nu3. Capsid scaffolding protein Nu3 multimerizes and interacts with major capsid protein gpE.</text>
</comment>
<comment type="interaction">
    <interactant intactId="EBI-4478358">
        <id>P03711</id>
    </interactant>
    <interactant intactId="EBI-4478358">
        <id>P03711</id>
        <label>NU3</label>
    </interactant>
    <organismsDiffer>false</organismsDiffer>
    <experiments>3</experiments>
</comment>
<comment type="subcellular location">
    <molecule>Isoform Capsid assembly protease C</molecule>
    <subcellularLocation>
        <location>Virion</location>
    </subcellularLocation>
    <subcellularLocation>
        <location>Host cytoplasm</location>
    </subcellularLocation>
</comment>
<comment type="subcellular location">
    <molecule>Isoform Capsid scaffolding protein Nu3</molecule>
    <subcellularLocation>
        <location>Host cytoplasm</location>
    </subcellularLocation>
</comment>
<comment type="alternative products">
    <event type="alternative initiation"/>
    <isoform>
        <id>P03711-1</id>
        <name>Capsid assembly protease C</name>
        <sequence type="displayed"/>
    </isoform>
    <isoform>
        <id>P03711-2</id>
        <name>Capsid scaffolding protein Nu3</name>
        <sequence type="described" ref="VSP_054968"/>
    </isoform>
</comment>
<comment type="miscellaneous">
    <text>It is uncertain wether Val-260 or Met-309 is the initiator for Capsid scaffolding protein Nu3.</text>
</comment>
<comment type="miscellaneous">
    <molecule>Isoform Capsid scaffolding protein Nu3</molecule>
    <text evidence="4">Produced by alternative initiation at Met-309 of isoform.</text>
</comment>
<comment type="similarity">
    <text evidence="4">Belongs to the peptidase S49 family.</text>
</comment>
<comment type="caution">
    <text evidence="4">Some of the E protein may be covalently linked with an equimolar amount of protein C and cleaved to yield minor capsid proteins X1 and X2. But recent data fail to detect cleavages products.</text>
</comment>
<comment type="sequence caution" evidence="4">
    <conflict type="erroneous initiation">
        <sequence resource="EMBL-CDS" id="AAA96538"/>
    </conflict>
</comment>
<reference key="1">
    <citation type="journal article" date="1982" name="J. Mol. Biol.">
        <title>Nucleotide sequence of bacteriophage lambda DNA.</title>
        <authorList>
            <person name="Sanger F."/>
            <person name="Coulson A.R."/>
            <person name="Hong G.F."/>
            <person name="Hill D.F."/>
            <person name="Petersen G.B."/>
        </authorList>
    </citation>
    <scope>NUCLEOTIDE SEQUENCE [LARGE SCALE GENOMIC DNA]</scope>
</reference>
<reference key="2">
    <citation type="journal article" date="1975" name="Virology">
        <title>The role of gene Nu3 in bacteriophage lambda head morphogenesis.</title>
        <authorList>
            <person name="Ray P."/>
            <person name="Murialdo H."/>
        </authorList>
    </citation>
    <scope>FUNCTION (ISOFORM CAPSID SCAFFOLDING PROTEIN NU3)</scope>
</reference>
<reference key="3">
    <citation type="journal article" date="1992" name="J. Biol. Chem.">
        <title>The purification and properties of the scaffolding protein of bacteriophage lambda.</title>
        <authorList>
            <person name="Ziegelhoffer T."/>
            <person name="Yau P."/>
            <person name="Chandrasekhar G.N."/>
            <person name="Kochan J."/>
            <person name="Georgopoulos C."/>
            <person name="Murialdo H."/>
        </authorList>
    </citation>
    <scope>CHARACTERIZATION (ISOFORM CAPSID SCAFFOLDING PROTEIN NU3)</scope>
</reference>
<reference key="4">
    <citation type="journal article" date="2010" name="J. Mol. Biol.">
        <title>Assembly and maturation of the bacteriophage lambda procapsid: gpC is the viral protease.</title>
        <authorList>
            <person name="Medina E."/>
            <person name="Wieczorek D."/>
            <person name="Medina E.M."/>
            <person name="Yang Q."/>
            <person name="Feiss M."/>
            <person name="Catalano C.E."/>
        </authorList>
    </citation>
    <scope>FUNCTION</scope>
    <scope>CAUTION (ISOFORM CAPSID ASSEMBLY PROTEASE C)</scope>
    <scope>MUTAGENESIS OF SER-166</scope>
</reference>
<reference key="5">
    <citation type="journal article" date="2011" name="J. Mol. Biol.">
        <title>The bacteriophage lambda gpNu3 scaffolding protein is an intrinsically disordered and biologically functional procapsid assembly catalyst.</title>
        <authorList>
            <person name="Medina E.M."/>
            <person name="Andrews B.T."/>
            <person name="Nakatani E."/>
            <person name="Catalano C.E."/>
        </authorList>
    </citation>
    <scope>FUNCTION OF CAPSID SCAFFOLDING PROTEIN NU3</scope>
    <scope>INTERACTION WITH MAJOR CAPSID PROTEIN GPE (ISOFORM CAPSID SCAFFOLDING PROTEIN NU3)</scope>
</reference>
<organismHost>
    <name type="scientific">Escherichia coli</name>
    <dbReference type="NCBI Taxonomy" id="562"/>
</organismHost>
<protein>
    <recommendedName>
        <fullName>Capsid assembly protease C</fullName>
        <ecNumber>3.4.21.-</ecNumber>
    </recommendedName>
    <alternativeName>
        <fullName>Gene product C</fullName>
        <shortName>GPC</shortName>
    </alternativeName>
    <alternativeName>
        <fullName>Minor capsid protein C</fullName>
    </alternativeName>
</protein>
<keyword id="KW-0024">Alternative initiation</keyword>
<keyword id="KW-0167">Capsid protein</keyword>
<keyword id="KW-1035">Host cytoplasm</keyword>
<keyword id="KW-0378">Hydrolase</keyword>
<keyword id="KW-0645">Protease</keyword>
<keyword id="KW-1185">Reference proteome</keyword>
<keyword id="KW-0720">Serine protease</keyword>
<keyword id="KW-0118">Viral capsid assembly</keyword>
<keyword id="KW-1273">Viral capsid maturation</keyword>
<keyword id="KW-1188">Viral release from host cell</keyword>
<keyword id="KW-0946">Virion</keyword>